<keyword id="KW-0067">ATP-binding</keyword>
<keyword id="KW-0963">Cytoplasm</keyword>
<keyword id="KW-0418">Kinase</keyword>
<keyword id="KW-0479">Metal-binding</keyword>
<keyword id="KW-0545">Nucleotide biosynthesis</keyword>
<keyword id="KW-0547">Nucleotide-binding</keyword>
<keyword id="KW-0808">Transferase</keyword>
<keyword id="KW-0862">Zinc</keyword>
<dbReference type="EC" id="2.7.4.3" evidence="1"/>
<dbReference type="EMBL" id="CP000879">
    <property type="protein sequence ID" value="ABX31493.1"/>
    <property type="molecule type" value="Genomic_DNA"/>
</dbReference>
<dbReference type="RefSeq" id="WP_012208596.1">
    <property type="nucleotide sequence ID" value="NC_010003.1"/>
</dbReference>
<dbReference type="SMR" id="A9BFZ7"/>
<dbReference type="STRING" id="403833.Pmob_0769"/>
<dbReference type="KEGG" id="pmo:Pmob_0769"/>
<dbReference type="eggNOG" id="COG0563">
    <property type="taxonomic scope" value="Bacteria"/>
</dbReference>
<dbReference type="HOGENOM" id="CLU_032354_1_2_0"/>
<dbReference type="OrthoDB" id="9805030at2"/>
<dbReference type="UniPathway" id="UPA00588">
    <property type="reaction ID" value="UER00649"/>
</dbReference>
<dbReference type="Proteomes" id="UP000000789">
    <property type="component" value="Chromosome"/>
</dbReference>
<dbReference type="GO" id="GO:0005737">
    <property type="term" value="C:cytoplasm"/>
    <property type="evidence" value="ECO:0007669"/>
    <property type="project" value="UniProtKB-SubCell"/>
</dbReference>
<dbReference type="GO" id="GO:0004017">
    <property type="term" value="F:adenylate kinase activity"/>
    <property type="evidence" value="ECO:0007669"/>
    <property type="project" value="UniProtKB-UniRule"/>
</dbReference>
<dbReference type="GO" id="GO:0005524">
    <property type="term" value="F:ATP binding"/>
    <property type="evidence" value="ECO:0007669"/>
    <property type="project" value="UniProtKB-UniRule"/>
</dbReference>
<dbReference type="GO" id="GO:0008270">
    <property type="term" value="F:zinc ion binding"/>
    <property type="evidence" value="ECO:0007669"/>
    <property type="project" value="UniProtKB-UniRule"/>
</dbReference>
<dbReference type="GO" id="GO:0044209">
    <property type="term" value="P:AMP salvage"/>
    <property type="evidence" value="ECO:0007669"/>
    <property type="project" value="UniProtKB-UniRule"/>
</dbReference>
<dbReference type="CDD" id="cd01428">
    <property type="entry name" value="ADK"/>
    <property type="match status" value="1"/>
</dbReference>
<dbReference type="FunFam" id="3.40.50.300:FF:000106">
    <property type="entry name" value="Adenylate kinase mitochondrial"/>
    <property type="match status" value="1"/>
</dbReference>
<dbReference type="Gene3D" id="3.40.50.300">
    <property type="entry name" value="P-loop containing nucleotide triphosphate hydrolases"/>
    <property type="match status" value="1"/>
</dbReference>
<dbReference type="HAMAP" id="MF_00235">
    <property type="entry name" value="Adenylate_kinase_Adk"/>
    <property type="match status" value="1"/>
</dbReference>
<dbReference type="InterPro" id="IPR006259">
    <property type="entry name" value="Adenyl_kin_sub"/>
</dbReference>
<dbReference type="InterPro" id="IPR000850">
    <property type="entry name" value="Adenylat/UMP-CMP_kin"/>
</dbReference>
<dbReference type="InterPro" id="IPR033690">
    <property type="entry name" value="Adenylat_kinase_CS"/>
</dbReference>
<dbReference type="InterPro" id="IPR007862">
    <property type="entry name" value="Adenylate_kinase_lid-dom"/>
</dbReference>
<dbReference type="InterPro" id="IPR027417">
    <property type="entry name" value="P-loop_NTPase"/>
</dbReference>
<dbReference type="NCBIfam" id="TIGR01351">
    <property type="entry name" value="adk"/>
    <property type="match status" value="1"/>
</dbReference>
<dbReference type="NCBIfam" id="NF001380">
    <property type="entry name" value="PRK00279.1-2"/>
    <property type="match status" value="1"/>
</dbReference>
<dbReference type="NCBIfam" id="NF001381">
    <property type="entry name" value="PRK00279.1-3"/>
    <property type="match status" value="1"/>
</dbReference>
<dbReference type="NCBIfam" id="NF011100">
    <property type="entry name" value="PRK14527.1"/>
    <property type="match status" value="1"/>
</dbReference>
<dbReference type="PANTHER" id="PTHR23359">
    <property type="entry name" value="NUCLEOTIDE KINASE"/>
    <property type="match status" value="1"/>
</dbReference>
<dbReference type="Pfam" id="PF00406">
    <property type="entry name" value="ADK"/>
    <property type="match status" value="1"/>
</dbReference>
<dbReference type="Pfam" id="PF05191">
    <property type="entry name" value="ADK_lid"/>
    <property type="match status" value="1"/>
</dbReference>
<dbReference type="PRINTS" id="PR00094">
    <property type="entry name" value="ADENYLTKNASE"/>
</dbReference>
<dbReference type="SUPFAM" id="SSF52540">
    <property type="entry name" value="P-loop containing nucleoside triphosphate hydrolases"/>
    <property type="match status" value="1"/>
</dbReference>
<dbReference type="PROSITE" id="PS00113">
    <property type="entry name" value="ADENYLATE_KINASE"/>
    <property type="match status" value="1"/>
</dbReference>
<protein>
    <recommendedName>
        <fullName evidence="1">Adenylate kinase</fullName>
        <shortName evidence="1">AK</shortName>
        <ecNumber evidence="1">2.7.4.3</ecNumber>
    </recommendedName>
    <alternativeName>
        <fullName evidence="1">ATP-AMP transphosphorylase</fullName>
    </alternativeName>
    <alternativeName>
        <fullName evidence="1">ATP:AMP phosphotransferase</fullName>
    </alternativeName>
    <alternativeName>
        <fullName evidence="1">Adenylate monophosphate kinase</fullName>
    </alternativeName>
</protein>
<reference key="1">
    <citation type="submission" date="2007-11" db="EMBL/GenBank/DDBJ databases">
        <title>Complete sequence of Petroga mobilis SJ95.</title>
        <authorList>
            <consortium name="US DOE Joint Genome Institute"/>
            <person name="Copeland A."/>
            <person name="Lucas S."/>
            <person name="Lapidus A."/>
            <person name="Barry K."/>
            <person name="Glavina del Rio T."/>
            <person name="Dalin E."/>
            <person name="Tice H."/>
            <person name="Pitluck S."/>
            <person name="Meincke L."/>
            <person name="Brettin T."/>
            <person name="Bruce D."/>
            <person name="Detter J.C."/>
            <person name="Han C."/>
            <person name="Kuske C.R."/>
            <person name="Schmutz J."/>
            <person name="Larimer F."/>
            <person name="Land M."/>
            <person name="Hauser L."/>
            <person name="Kyrpides N."/>
            <person name="Mikhailova N."/>
            <person name="Noll K."/>
            <person name="Richardson P."/>
        </authorList>
    </citation>
    <scope>NUCLEOTIDE SEQUENCE [LARGE SCALE GENOMIC DNA]</scope>
    <source>
        <strain>DSM 10674 / SJ95</strain>
    </source>
</reference>
<organism>
    <name type="scientific">Petrotoga mobilis (strain DSM 10674 / SJ95)</name>
    <dbReference type="NCBI Taxonomy" id="403833"/>
    <lineage>
        <taxon>Bacteria</taxon>
        <taxon>Thermotogati</taxon>
        <taxon>Thermotogota</taxon>
        <taxon>Thermotogae</taxon>
        <taxon>Petrotogales</taxon>
        <taxon>Petrotogaceae</taxon>
        <taxon>Petrotoga</taxon>
    </lineage>
</organism>
<evidence type="ECO:0000255" key="1">
    <source>
        <dbReference type="HAMAP-Rule" id="MF_00235"/>
    </source>
</evidence>
<gene>
    <name evidence="1" type="primary">adk</name>
    <name type="ordered locus">Pmob_0769</name>
</gene>
<comment type="function">
    <text evidence="1">Catalyzes the reversible transfer of the terminal phosphate group between ATP and AMP. Plays an important role in cellular energy homeostasis and in adenine nucleotide metabolism.</text>
</comment>
<comment type="catalytic activity">
    <reaction evidence="1">
        <text>AMP + ATP = 2 ADP</text>
        <dbReference type="Rhea" id="RHEA:12973"/>
        <dbReference type="ChEBI" id="CHEBI:30616"/>
        <dbReference type="ChEBI" id="CHEBI:456215"/>
        <dbReference type="ChEBI" id="CHEBI:456216"/>
        <dbReference type="EC" id="2.7.4.3"/>
    </reaction>
</comment>
<comment type="pathway">
    <text evidence="1">Purine metabolism; AMP biosynthesis via salvage pathway; AMP from ADP: step 1/1.</text>
</comment>
<comment type="subunit">
    <text evidence="1">Monomer.</text>
</comment>
<comment type="subcellular location">
    <subcellularLocation>
        <location evidence="1">Cytoplasm</location>
    </subcellularLocation>
</comment>
<comment type="domain">
    <text evidence="1">Consists of three domains, a large central CORE domain and two small peripheral domains, NMPbind and LID, which undergo movements during catalysis. The LID domain closes over the site of phosphoryl transfer upon ATP binding. Assembling and dissambling the active center during each catalytic cycle provides an effective means to prevent ATP hydrolysis. Some bacteria have evolved a zinc-coordinating structure that stabilizes the LID domain.</text>
</comment>
<comment type="similarity">
    <text evidence="1">Belongs to the adenylate kinase family.</text>
</comment>
<accession>A9BFZ7</accession>
<sequence length="215" mass="24573">MRLLFFGPPGAGKGTQAKKVAQEFQIVHISTGDILRDAVSKGTELGKMAKAIMDRGELVSDEIMNSLVKERLEELDSFILDGYPRTLDQAKFLDQATKELQKEIDAAVLIDVSEEEIVKRISNRRVCPNCGKVYNLITLQPKEDEKCDVCGTKLIQRDDDKEEVVRERYKVYKKNTEPVIEYYRKNNKIITIDGAQNVEDVTKELFNILRSFNKQ</sequence>
<name>KAD_PETMO</name>
<proteinExistence type="inferred from homology"/>
<feature type="chain" id="PRO_1000078283" description="Adenylate kinase">
    <location>
        <begin position="1"/>
        <end position="215"/>
    </location>
</feature>
<feature type="region of interest" description="NMP" evidence="1">
    <location>
        <begin position="30"/>
        <end position="59"/>
    </location>
</feature>
<feature type="region of interest" description="LID" evidence="1">
    <location>
        <begin position="123"/>
        <end position="160"/>
    </location>
</feature>
<feature type="binding site" evidence="1">
    <location>
        <begin position="10"/>
        <end position="15"/>
    </location>
    <ligand>
        <name>ATP</name>
        <dbReference type="ChEBI" id="CHEBI:30616"/>
    </ligand>
</feature>
<feature type="binding site" evidence="1">
    <location>
        <position position="31"/>
    </location>
    <ligand>
        <name>AMP</name>
        <dbReference type="ChEBI" id="CHEBI:456215"/>
    </ligand>
</feature>
<feature type="binding site" evidence="1">
    <location>
        <position position="36"/>
    </location>
    <ligand>
        <name>AMP</name>
        <dbReference type="ChEBI" id="CHEBI:456215"/>
    </ligand>
</feature>
<feature type="binding site" evidence="1">
    <location>
        <begin position="57"/>
        <end position="59"/>
    </location>
    <ligand>
        <name>AMP</name>
        <dbReference type="ChEBI" id="CHEBI:456215"/>
    </ligand>
</feature>
<feature type="binding site" evidence="1">
    <location>
        <begin position="82"/>
        <end position="85"/>
    </location>
    <ligand>
        <name>AMP</name>
        <dbReference type="ChEBI" id="CHEBI:456215"/>
    </ligand>
</feature>
<feature type="binding site" evidence="1">
    <location>
        <position position="89"/>
    </location>
    <ligand>
        <name>AMP</name>
        <dbReference type="ChEBI" id="CHEBI:456215"/>
    </ligand>
</feature>
<feature type="binding site" evidence="1">
    <location>
        <position position="124"/>
    </location>
    <ligand>
        <name>ATP</name>
        <dbReference type="ChEBI" id="CHEBI:30616"/>
    </ligand>
</feature>
<feature type="binding site" evidence="1">
    <location>
        <position position="127"/>
    </location>
    <ligand>
        <name>Zn(2+)</name>
        <dbReference type="ChEBI" id="CHEBI:29105"/>
        <note>structural</note>
    </ligand>
</feature>
<feature type="binding site" evidence="1">
    <location>
        <position position="130"/>
    </location>
    <ligand>
        <name>Zn(2+)</name>
        <dbReference type="ChEBI" id="CHEBI:29105"/>
        <note>structural</note>
    </ligand>
</feature>
<feature type="binding site" evidence="1">
    <location>
        <begin position="133"/>
        <end position="134"/>
    </location>
    <ligand>
        <name>ATP</name>
        <dbReference type="ChEBI" id="CHEBI:30616"/>
    </ligand>
</feature>
<feature type="binding site" evidence="1">
    <location>
        <position position="147"/>
    </location>
    <ligand>
        <name>Zn(2+)</name>
        <dbReference type="ChEBI" id="CHEBI:29105"/>
        <note>structural</note>
    </ligand>
</feature>
<feature type="binding site" evidence="1">
    <location>
        <position position="150"/>
    </location>
    <ligand>
        <name>Zn(2+)</name>
        <dbReference type="ChEBI" id="CHEBI:29105"/>
        <note>structural</note>
    </ligand>
</feature>
<feature type="binding site" evidence="1">
    <location>
        <position position="157"/>
    </location>
    <ligand>
        <name>AMP</name>
        <dbReference type="ChEBI" id="CHEBI:456215"/>
    </ligand>
</feature>
<feature type="binding site" evidence="1">
    <location>
        <position position="168"/>
    </location>
    <ligand>
        <name>AMP</name>
        <dbReference type="ChEBI" id="CHEBI:456215"/>
    </ligand>
</feature>
<feature type="binding site" evidence="1">
    <location>
        <position position="196"/>
    </location>
    <ligand>
        <name>ATP</name>
        <dbReference type="ChEBI" id="CHEBI:30616"/>
    </ligand>
</feature>